<feature type="chain" id="PRO_0000196262" description="Maltoporin">
    <location>
        <begin position="1" status="less than"/>
        <end position="275" status="greater than"/>
    </location>
</feature>
<feature type="site" description="Important in sugar transport" evidence="1">
    <location>
        <position position="14"/>
    </location>
</feature>
<feature type="site" description="Greasy slide, important in sugar transport" evidence="1">
    <location>
        <position position="105"/>
    </location>
</feature>
<feature type="site" description="Greasy slide, important in sugar transport" evidence="1">
    <location>
        <position position="231"/>
    </location>
</feature>
<feature type="non-terminal residue">
    <location>
        <position position="1"/>
    </location>
</feature>
<feature type="non-terminal residue">
    <location>
        <position position="275"/>
    </location>
</feature>
<name>LAMB_VIBPH</name>
<evidence type="ECO:0000250" key="1"/>
<evidence type="ECO:0000305" key="2"/>
<protein>
    <recommendedName>
        <fullName>Maltoporin</fullName>
    </recommendedName>
    <alternativeName>
        <fullName>Maltose-inducible porin</fullName>
    </alternativeName>
    <alternativeName>
        <fullName>Outer membrane protein S</fullName>
    </alternativeName>
</protein>
<dbReference type="EMBL" id="U16151">
    <property type="protein sequence ID" value="AAA70347.1"/>
    <property type="molecule type" value="Genomic_DNA"/>
</dbReference>
<dbReference type="SMR" id="Q56714"/>
<dbReference type="GO" id="GO:0009279">
    <property type="term" value="C:cell outer membrane"/>
    <property type="evidence" value="ECO:0007669"/>
    <property type="project" value="UniProtKB-SubCell"/>
</dbReference>
<dbReference type="GO" id="GO:0046930">
    <property type="term" value="C:pore complex"/>
    <property type="evidence" value="ECO:0007669"/>
    <property type="project" value="UniProtKB-KW"/>
</dbReference>
<dbReference type="GO" id="GO:0015144">
    <property type="term" value="F:carbohydrate transmembrane transporter activity"/>
    <property type="evidence" value="ECO:0007669"/>
    <property type="project" value="TreeGrafter"/>
</dbReference>
<dbReference type="GO" id="GO:0015288">
    <property type="term" value="F:porin activity"/>
    <property type="evidence" value="ECO:0007669"/>
    <property type="project" value="UniProtKB-KW"/>
</dbReference>
<dbReference type="GO" id="GO:0006811">
    <property type="term" value="P:monoatomic ion transport"/>
    <property type="evidence" value="ECO:0007669"/>
    <property type="project" value="UniProtKB-KW"/>
</dbReference>
<dbReference type="GO" id="GO:0015774">
    <property type="term" value="P:polysaccharide transport"/>
    <property type="evidence" value="ECO:0007669"/>
    <property type="project" value="TreeGrafter"/>
</dbReference>
<dbReference type="Gene3D" id="2.40.170.10">
    <property type="entry name" value="Porin, LamB type"/>
    <property type="match status" value="1"/>
</dbReference>
<dbReference type="InterPro" id="IPR050286">
    <property type="entry name" value="G_neg_Bact_CarbUptk_Porin"/>
</dbReference>
<dbReference type="InterPro" id="IPR003192">
    <property type="entry name" value="Porin_LamB"/>
</dbReference>
<dbReference type="InterPro" id="IPR036998">
    <property type="entry name" value="Porin_LamB_sf"/>
</dbReference>
<dbReference type="PANTHER" id="PTHR38762">
    <property type="entry name" value="CRYPTIC OUTER MEMBRANE PORIN BGLH-RELATED"/>
    <property type="match status" value="1"/>
</dbReference>
<dbReference type="PANTHER" id="PTHR38762:SF1">
    <property type="entry name" value="CRYPTIC OUTER MEMBRANE PORIN BGLH-RELATED"/>
    <property type="match status" value="1"/>
</dbReference>
<dbReference type="Pfam" id="PF02264">
    <property type="entry name" value="LamB"/>
    <property type="match status" value="1"/>
</dbReference>
<dbReference type="SUPFAM" id="SSF56935">
    <property type="entry name" value="Porins"/>
    <property type="match status" value="1"/>
</dbReference>
<proteinExistence type="inferred from homology"/>
<organism>
    <name type="scientific">Vibrio parahaemolyticus</name>
    <dbReference type="NCBI Taxonomy" id="670"/>
    <lineage>
        <taxon>Bacteria</taxon>
        <taxon>Pseudomonadati</taxon>
        <taxon>Pseudomonadota</taxon>
        <taxon>Gammaproteobacteria</taxon>
        <taxon>Vibrionales</taxon>
        <taxon>Vibrionaceae</taxon>
        <taxon>Vibrio</taxon>
    </lineage>
</organism>
<reference key="1">
    <citation type="journal article" date="1995" name="Biochem. Biophys. Res. Commun.">
        <title>Sequence alignment and structural modelling of the LamB glycoporin family.</title>
        <authorList>
            <person name="Lang H."/>
            <person name="Ferenci T."/>
        </authorList>
    </citation>
    <scope>NUCLEOTIDE SEQUENCE [GENOMIC DNA]</scope>
</reference>
<gene>
    <name type="primary">lamB</name>
    <name type="synonym">ompS</name>
</gene>
<sequence>RCYQRKDIHITDFYFLNTSGTGGGIENLSVGNQKLSLAIIQDGEDQNGAGYIADARLANIGLWEDASLEVALGINFSTESKNGKYDGDDGLLASGIIHQNMSNGFNQTVVQVGTAGYGIQMANFWGAGAYYDRSGDQNDASGYRVINWGVMNLGENWEMGHQLAYLAGSDLGTTKYDSSQYSIVARPMYKWNDTMRTIFEAGYNAGEVDDVDFGGAKFTVAQAWAMGDSFWARPEIRVYGSYLMDLENDSFGEVKNDTGVVTAAGTDNDFVVGIH</sequence>
<comment type="function">
    <text evidence="1">Involved in the transport of maltose and maltodextrins.</text>
</comment>
<comment type="catalytic activity">
    <reaction evidence="1">
        <text>beta-maltose(in) = beta-maltose(out)</text>
        <dbReference type="Rhea" id="RHEA:29731"/>
        <dbReference type="ChEBI" id="CHEBI:18147"/>
    </reaction>
</comment>
<comment type="subunit">
    <text evidence="1">Homotrimer formed of three 18-stranded antiparallel beta-barrels, containing three independent channels.</text>
</comment>
<comment type="subcellular location">
    <subcellularLocation>
        <location evidence="1">Cell outer membrane</location>
        <topology evidence="1">Multi-pass membrane protein</topology>
    </subcellularLocation>
</comment>
<comment type="induction">
    <text evidence="2">By maltose.</text>
</comment>
<comment type="similarity">
    <text evidence="2">Belongs to the porin LamB (TC 1.B.3) family.</text>
</comment>
<accession>Q56714</accession>
<keyword id="KW-0998">Cell outer membrane</keyword>
<keyword id="KW-0406">Ion transport</keyword>
<keyword id="KW-0472">Membrane</keyword>
<keyword id="KW-0626">Porin</keyword>
<keyword id="KW-0762">Sugar transport</keyword>
<keyword id="KW-0812">Transmembrane</keyword>
<keyword id="KW-1134">Transmembrane beta strand</keyword>
<keyword id="KW-0813">Transport</keyword>